<feature type="chain" id="PRO_1000197218" description="Glycine--tRNA ligase beta subunit">
    <location>
        <begin position="1"/>
        <end position="678"/>
    </location>
</feature>
<organism>
    <name type="scientific">Streptococcus pneumoniae (strain 70585)</name>
    <dbReference type="NCBI Taxonomy" id="488221"/>
    <lineage>
        <taxon>Bacteria</taxon>
        <taxon>Bacillati</taxon>
        <taxon>Bacillota</taxon>
        <taxon>Bacilli</taxon>
        <taxon>Lactobacillales</taxon>
        <taxon>Streptococcaceae</taxon>
        <taxon>Streptococcus</taxon>
    </lineage>
</organism>
<reference key="1">
    <citation type="journal article" date="2010" name="Genome Biol.">
        <title>Structure and dynamics of the pan-genome of Streptococcus pneumoniae and closely related species.</title>
        <authorList>
            <person name="Donati C."/>
            <person name="Hiller N.L."/>
            <person name="Tettelin H."/>
            <person name="Muzzi A."/>
            <person name="Croucher N.J."/>
            <person name="Angiuoli S.V."/>
            <person name="Oggioni M."/>
            <person name="Dunning Hotopp J.C."/>
            <person name="Hu F.Z."/>
            <person name="Riley D.R."/>
            <person name="Covacci A."/>
            <person name="Mitchell T.J."/>
            <person name="Bentley S.D."/>
            <person name="Kilian M."/>
            <person name="Ehrlich G.D."/>
            <person name="Rappuoli R."/>
            <person name="Moxon E.R."/>
            <person name="Masignani V."/>
        </authorList>
    </citation>
    <scope>NUCLEOTIDE SEQUENCE [LARGE SCALE GENOMIC DNA]</scope>
    <source>
        <strain>70585</strain>
    </source>
</reference>
<sequence>MTKNLLVELGLEELPAYVVTPSEKQLGEKMAAFLKGKRLSFEAIQTFSTPRRLAVRVTGLSDKQSDLTEDFKGPAKKIALDSDGNFTKAAQGFVRGKGLTVEDIEFREIKGEEYVYVTKEEIGQAVEAIVPGIVDVLKSLTFPVSMHWAGNSFEYIRPVHTLTVLLDEQEFDLDFLDIKGSRVSRGHRFLGKETKIQSALSYEEDLRKQFVIADPCEREQMIVDQIKEIEAKHDVRIEIDADLLNEVLNLVEYPTAFMGSFDAKYLEVPEEVLVTSMKEHQRYFVVRDQDGKLLPNFISVRNGNAERLKNVIKGNEKVLVARLEDGEFFWREDQKLVISDLVEKLNNVTFHEKIGSLREHMIRTGQITVLLAEKADLSVDETVDLARAAAIYKFDLLTGMVGEFDELQGIMGEKYTLLAGETPAVAAAIREHYMPTSAEGELPESKVGAVLAIADKLDTILSFFSVGLIPSGSNDPYALRRATQGVVRILDAFGWHIAMDELIDSLYALKFDSLTYENKAEVMDFIKARVDKMMGSTPKDIKEAVLAGSNFVVADMLEAASALVEVSKEEDFKPSVESLSRAFNLAEKAEGVATVDSALFENDQEKALAEAVETLVLSGPASQQLKQLFALSPVIDAFFENTMVMAEDQAVRQNRLAILSQLTKKAAKFACFNQINTK</sequence>
<proteinExistence type="inferred from homology"/>
<comment type="catalytic activity">
    <reaction evidence="1">
        <text>tRNA(Gly) + glycine + ATP = glycyl-tRNA(Gly) + AMP + diphosphate</text>
        <dbReference type="Rhea" id="RHEA:16013"/>
        <dbReference type="Rhea" id="RHEA-COMP:9664"/>
        <dbReference type="Rhea" id="RHEA-COMP:9683"/>
        <dbReference type="ChEBI" id="CHEBI:30616"/>
        <dbReference type="ChEBI" id="CHEBI:33019"/>
        <dbReference type="ChEBI" id="CHEBI:57305"/>
        <dbReference type="ChEBI" id="CHEBI:78442"/>
        <dbReference type="ChEBI" id="CHEBI:78522"/>
        <dbReference type="ChEBI" id="CHEBI:456215"/>
        <dbReference type="EC" id="6.1.1.14"/>
    </reaction>
</comment>
<comment type="subunit">
    <text evidence="1">Tetramer of two alpha and two beta subunits.</text>
</comment>
<comment type="subcellular location">
    <subcellularLocation>
        <location evidence="1">Cytoplasm</location>
    </subcellularLocation>
</comment>
<comment type="similarity">
    <text evidence="1">Belongs to the class-II aminoacyl-tRNA synthetase family.</text>
</comment>
<dbReference type="EC" id="6.1.1.14" evidence="1"/>
<dbReference type="EMBL" id="CP000918">
    <property type="protein sequence ID" value="ACO16013.1"/>
    <property type="molecule type" value="Genomic_DNA"/>
</dbReference>
<dbReference type="RefSeq" id="WP_000164789.1">
    <property type="nucleotide sequence ID" value="NC_012468.1"/>
</dbReference>
<dbReference type="SMR" id="C1C870"/>
<dbReference type="KEGG" id="snm:SP70585_1516"/>
<dbReference type="HOGENOM" id="CLU_007220_2_2_9"/>
<dbReference type="Proteomes" id="UP000002211">
    <property type="component" value="Chromosome"/>
</dbReference>
<dbReference type="GO" id="GO:0005829">
    <property type="term" value="C:cytosol"/>
    <property type="evidence" value="ECO:0007669"/>
    <property type="project" value="TreeGrafter"/>
</dbReference>
<dbReference type="GO" id="GO:0004814">
    <property type="term" value="F:arginine-tRNA ligase activity"/>
    <property type="evidence" value="ECO:0007669"/>
    <property type="project" value="InterPro"/>
</dbReference>
<dbReference type="GO" id="GO:0005524">
    <property type="term" value="F:ATP binding"/>
    <property type="evidence" value="ECO:0007669"/>
    <property type="project" value="UniProtKB-UniRule"/>
</dbReference>
<dbReference type="GO" id="GO:0004820">
    <property type="term" value="F:glycine-tRNA ligase activity"/>
    <property type="evidence" value="ECO:0007669"/>
    <property type="project" value="UniProtKB-UniRule"/>
</dbReference>
<dbReference type="GO" id="GO:0006420">
    <property type="term" value="P:arginyl-tRNA aminoacylation"/>
    <property type="evidence" value="ECO:0007669"/>
    <property type="project" value="InterPro"/>
</dbReference>
<dbReference type="GO" id="GO:0006426">
    <property type="term" value="P:glycyl-tRNA aminoacylation"/>
    <property type="evidence" value="ECO:0007669"/>
    <property type="project" value="UniProtKB-UniRule"/>
</dbReference>
<dbReference type="HAMAP" id="MF_00255">
    <property type="entry name" value="Gly_tRNA_synth_beta"/>
    <property type="match status" value="1"/>
</dbReference>
<dbReference type="InterPro" id="IPR008909">
    <property type="entry name" value="DALR_anticod-bd"/>
</dbReference>
<dbReference type="InterPro" id="IPR015944">
    <property type="entry name" value="Gly-tRNA-synth_bsu"/>
</dbReference>
<dbReference type="InterPro" id="IPR006194">
    <property type="entry name" value="Gly-tRNA-synth_heterodimer"/>
</dbReference>
<dbReference type="NCBIfam" id="TIGR00211">
    <property type="entry name" value="glyS"/>
    <property type="match status" value="1"/>
</dbReference>
<dbReference type="PANTHER" id="PTHR30075:SF2">
    <property type="entry name" value="GLYCINE--TRNA LIGASE, CHLOROPLASTIC_MITOCHONDRIAL 2"/>
    <property type="match status" value="1"/>
</dbReference>
<dbReference type="PANTHER" id="PTHR30075">
    <property type="entry name" value="GLYCYL-TRNA SYNTHETASE"/>
    <property type="match status" value="1"/>
</dbReference>
<dbReference type="Pfam" id="PF05746">
    <property type="entry name" value="DALR_1"/>
    <property type="match status" value="1"/>
</dbReference>
<dbReference type="Pfam" id="PF02092">
    <property type="entry name" value="tRNA_synt_2f"/>
    <property type="match status" value="1"/>
</dbReference>
<dbReference type="PRINTS" id="PR01045">
    <property type="entry name" value="TRNASYNTHGB"/>
</dbReference>
<dbReference type="SUPFAM" id="SSF109604">
    <property type="entry name" value="HD-domain/PDEase-like"/>
    <property type="match status" value="1"/>
</dbReference>
<dbReference type="PROSITE" id="PS50861">
    <property type="entry name" value="AA_TRNA_LIGASE_II_GLYAB"/>
    <property type="match status" value="1"/>
</dbReference>
<name>SYGB_STRP7</name>
<evidence type="ECO:0000255" key="1">
    <source>
        <dbReference type="HAMAP-Rule" id="MF_00255"/>
    </source>
</evidence>
<keyword id="KW-0030">Aminoacyl-tRNA synthetase</keyword>
<keyword id="KW-0067">ATP-binding</keyword>
<keyword id="KW-0963">Cytoplasm</keyword>
<keyword id="KW-0436">Ligase</keyword>
<keyword id="KW-0547">Nucleotide-binding</keyword>
<keyword id="KW-0648">Protein biosynthesis</keyword>
<protein>
    <recommendedName>
        <fullName evidence="1">Glycine--tRNA ligase beta subunit</fullName>
        <ecNumber evidence="1">6.1.1.14</ecNumber>
    </recommendedName>
    <alternativeName>
        <fullName evidence="1">Glycyl-tRNA synthetase beta subunit</fullName>
        <shortName evidence="1">GlyRS</shortName>
    </alternativeName>
</protein>
<accession>C1C870</accession>
<gene>
    <name evidence="1" type="primary">glyS</name>
    <name type="ordered locus">SP70585_1516</name>
</gene>